<accession>Q1RIN6</accession>
<comment type="function">
    <text evidence="1">Catalyzes the hydrolysis of inorganic pyrophosphate (PPi) forming two phosphate ions.</text>
</comment>
<comment type="catalytic activity">
    <reaction evidence="1">
        <text>diphosphate + H2O = 2 phosphate + H(+)</text>
        <dbReference type="Rhea" id="RHEA:24576"/>
        <dbReference type="ChEBI" id="CHEBI:15377"/>
        <dbReference type="ChEBI" id="CHEBI:15378"/>
        <dbReference type="ChEBI" id="CHEBI:33019"/>
        <dbReference type="ChEBI" id="CHEBI:43474"/>
        <dbReference type="EC" id="3.6.1.1"/>
    </reaction>
</comment>
<comment type="cofactor">
    <cofactor evidence="1">
        <name>Mg(2+)</name>
        <dbReference type="ChEBI" id="CHEBI:18420"/>
    </cofactor>
</comment>
<comment type="subunit">
    <text evidence="1">Homohexamer.</text>
</comment>
<comment type="subcellular location">
    <subcellularLocation>
        <location evidence="1">Cytoplasm</location>
    </subcellularLocation>
</comment>
<comment type="similarity">
    <text evidence="1">Belongs to the PPase family.</text>
</comment>
<proteinExistence type="inferred from homology"/>
<dbReference type="EC" id="3.6.1.1" evidence="1"/>
<dbReference type="EMBL" id="CP000087">
    <property type="protein sequence ID" value="ABE04778.1"/>
    <property type="molecule type" value="Genomic_DNA"/>
</dbReference>
<dbReference type="RefSeq" id="WP_011477365.1">
    <property type="nucleotide sequence ID" value="NC_007940.1"/>
</dbReference>
<dbReference type="SMR" id="Q1RIN6"/>
<dbReference type="KEGG" id="rbe:RBE_0697"/>
<dbReference type="eggNOG" id="COG0221">
    <property type="taxonomic scope" value="Bacteria"/>
</dbReference>
<dbReference type="HOGENOM" id="CLU_073198_1_0_5"/>
<dbReference type="OrthoDB" id="5187599at2"/>
<dbReference type="Proteomes" id="UP000001951">
    <property type="component" value="Chromosome"/>
</dbReference>
<dbReference type="GO" id="GO:0005737">
    <property type="term" value="C:cytoplasm"/>
    <property type="evidence" value="ECO:0007669"/>
    <property type="project" value="UniProtKB-SubCell"/>
</dbReference>
<dbReference type="GO" id="GO:0004427">
    <property type="term" value="F:inorganic diphosphate phosphatase activity"/>
    <property type="evidence" value="ECO:0007669"/>
    <property type="project" value="UniProtKB-UniRule"/>
</dbReference>
<dbReference type="GO" id="GO:0000287">
    <property type="term" value="F:magnesium ion binding"/>
    <property type="evidence" value="ECO:0007669"/>
    <property type="project" value="UniProtKB-UniRule"/>
</dbReference>
<dbReference type="GO" id="GO:0006796">
    <property type="term" value="P:phosphate-containing compound metabolic process"/>
    <property type="evidence" value="ECO:0007669"/>
    <property type="project" value="InterPro"/>
</dbReference>
<dbReference type="CDD" id="cd00412">
    <property type="entry name" value="pyrophosphatase"/>
    <property type="match status" value="1"/>
</dbReference>
<dbReference type="FunFam" id="3.90.80.10:FF:000003">
    <property type="entry name" value="Inorganic pyrophosphatase"/>
    <property type="match status" value="1"/>
</dbReference>
<dbReference type="Gene3D" id="3.90.80.10">
    <property type="entry name" value="Inorganic pyrophosphatase"/>
    <property type="match status" value="1"/>
</dbReference>
<dbReference type="HAMAP" id="MF_00209">
    <property type="entry name" value="Inorganic_PPase"/>
    <property type="match status" value="1"/>
</dbReference>
<dbReference type="InterPro" id="IPR008162">
    <property type="entry name" value="Pyrophosphatase"/>
</dbReference>
<dbReference type="InterPro" id="IPR036649">
    <property type="entry name" value="Pyrophosphatase_sf"/>
</dbReference>
<dbReference type="NCBIfam" id="NF002317">
    <property type="entry name" value="PRK01250.1"/>
    <property type="match status" value="1"/>
</dbReference>
<dbReference type="PANTHER" id="PTHR10286">
    <property type="entry name" value="INORGANIC PYROPHOSPHATASE"/>
    <property type="match status" value="1"/>
</dbReference>
<dbReference type="Pfam" id="PF00719">
    <property type="entry name" value="Pyrophosphatase"/>
    <property type="match status" value="1"/>
</dbReference>
<dbReference type="SUPFAM" id="SSF50324">
    <property type="entry name" value="Inorganic pyrophosphatase"/>
    <property type="match status" value="1"/>
</dbReference>
<dbReference type="PROSITE" id="PS00387">
    <property type="entry name" value="PPASE"/>
    <property type="match status" value="1"/>
</dbReference>
<protein>
    <recommendedName>
        <fullName evidence="1">Inorganic pyrophosphatase</fullName>
        <ecNumber evidence="1">3.6.1.1</ecNumber>
    </recommendedName>
    <alternativeName>
        <fullName evidence="1">Pyrophosphate phospho-hydrolase</fullName>
        <shortName evidence="1">PPase</shortName>
    </alternativeName>
</protein>
<organism>
    <name type="scientific">Rickettsia bellii (strain RML369-C)</name>
    <dbReference type="NCBI Taxonomy" id="336407"/>
    <lineage>
        <taxon>Bacteria</taxon>
        <taxon>Pseudomonadati</taxon>
        <taxon>Pseudomonadota</taxon>
        <taxon>Alphaproteobacteria</taxon>
        <taxon>Rickettsiales</taxon>
        <taxon>Rickettsiaceae</taxon>
        <taxon>Rickettsieae</taxon>
        <taxon>Rickettsia</taxon>
        <taxon>belli group</taxon>
    </lineage>
</organism>
<sequence>MFIDKIKAKANNDEINVIIEIPMNSGPIKYEFDKESGAVFVDRFMQTTMSYPCNYGFIPHTLSNDGDPVDVLVVSHHPVVPGSVIKCRAVGVLMMEDESGFDEKIIAVPTSKLDITFDHIKELDDVCEMLKKRIVHFFEHYKDLEKGKWVKVTGWENKAKADSLIEEGIERVEKM</sequence>
<name>IPYR_RICBR</name>
<reference key="1">
    <citation type="journal article" date="2006" name="PLoS Genet.">
        <title>Genome sequence of Rickettsia bellii illuminates the role of amoebae in gene exchanges between intracellular pathogens.</title>
        <authorList>
            <person name="Ogata H."/>
            <person name="La Scola B."/>
            <person name="Audic S."/>
            <person name="Renesto P."/>
            <person name="Blanc G."/>
            <person name="Robert C."/>
            <person name="Fournier P.-E."/>
            <person name="Claverie J.-M."/>
            <person name="Raoult D."/>
        </authorList>
    </citation>
    <scope>NUCLEOTIDE SEQUENCE [LARGE SCALE GENOMIC DNA]</scope>
    <source>
        <strain>RML369-C</strain>
    </source>
</reference>
<evidence type="ECO:0000255" key="1">
    <source>
        <dbReference type="HAMAP-Rule" id="MF_00209"/>
    </source>
</evidence>
<feature type="chain" id="PRO_0000278035" description="Inorganic pyrophosphatase">
    <location>
        <begin position="1"/>
        <end position="175"/>
    </location>
</feature>
<feature type="binding site" evidence="1">
    <location>
        <position position="29"/>
    </location>
    <ligand>
        <name>substrate</name>
    </ligand>
</feature>
<feature type="binding site" evidence="1">
    <location>
        <position position="43"/>
    </location>
    <ligand>
        <name>substrate</name>
    </ligand>
</feature>
<feature type="binding site" evidence="1">
    <location>
        <position position="55"/>
    </location>
    <ligand>
        <name>substrate</name>
    </ligand>
</feature>
<feature type="binding site" evidence="1">
    <location>
        <position position="65"/>
    </location>
    <ligand>
        <name>Mg(2+)</name>
        <dbReference type="ChEBI" id="CHEBI:18420"/>
        <label>1</label>
    </ligand>
</feature>
<feature type="binding site" evidence="1">
    <location>
        <position position="70"/>
    </location>
    <ligand>
        <name>Mg(2+)</name>
        <dbReference type="ChEBI" id="CHEBI:18420"/>
        <label>1</label>
    </ligand>
</feature>
<feature type="binding site" evidence="1">
    <location>
        <position position="70"/>
    </location>
    <ligand>
        <name>Mg(2+)</name>
        <dbReference type="ChEBI" id="CHEBI:18420"/>
        <label>2</label>
    </ligand>
</feature>
<feature type="binding site" evidence="1">
    <location>
        <position position="102"/>
    </location>
    <ligand>
        <name>Mg(2+)</name>
        <dbReference type="ChEBI" id="CHEBI:18420"/>
        <label>1</label>
    </ligand>
</feature>
<feature type="binding site" evidence="1">
    <location>
        <position position="141"/>
    </location>
    <ligand>
        <name>substrate</name>
    </ligand>
</feature>
<gene>
    <name evidence="1" type="primary">ppa</name>
    <name type="ordered locus">RBE_0697</name>
</gene>
<keyword id="KW-0963">Cytoplasm</keyword>
<keyword id="KW-0378">Hydrolase</keyword>
<keyword id="KW-0460">Magnesium</keyword>
<keyword id="KW-0479">Metal-binding</keyword>